<protein>
    <recommendedName>
        <fullName evidence="7">Dehydrogenase/reductase SDR family member FEY</fullName>
        <ecNumber evidence="7">1.1.-.-</ecNumber>
    </recommendedName>
    <alternativeName>
        <fullName evidence="6">Protein FOREVER YOUNG</fullName>
    </alternativeName>
</protein>
<sequence>MSDETTSSPSPAPAKKKQNLGWMEWMRGWSSVFGEILFQRITASHLENPLPLPSVNDLTCVVTGSTSGIGRETARQLAEAGAHVVMAVRNTKAAQELILQWQNEWSGKGLPLNIEAMEIDLLSLDSVARFAEAFNARLGPLHVLINNAGMFAMGEAQKFSEEGYEQHMQVNHLAPALLSVLLLPSLIRGSPSRIINVNSVMHSVGFVDPDDMNVVSGRRKYSSLIGYSSSKLAQIMFSSILFKKLPLETGVSVVCLSPGVVLTNVARDLSRILQALYAVIPYFIFSPQEGCRSSLFSATDPQIPEYWETLKNDDWPVCPFISQDCRPANPSEEAHNTETAQRVWKKTLELVGLPLDAVEKLIEGENIQCRYGAQHE</sequence>
<proteinExistence type="evidence at protein level"/>
<reference key="1">
    <citation type="journal article" date="1994" name="Plant J.">
        <title>The forever young gene encodes an oxidoreductase required for proper development of the Arabidopsis vegetative shoot apex.</title>
        <authorList>
            <person name="Callos J.D."/>
            <person name="DiRado M."/>
            <person name="Xu B."/>
            <person name="Behringer F.J."/>
            <person name="Link B.M."/>
            <person name="Medford J.I."/>
        </authorList>
    </citation>
    <scope>NUCLEOTIDE SEQUENCE [GENOMIC DNA]</scope>
    <scope>FUNCTION</scope>
    <scope>DISRUPTION PHENOTYPE</scope>
    <scope>TISSUE SPECIFICITY</scope>
</reference>
<reference key="2">
    <citation type="submission" date="1999-12" db="EMBL/GenBank/DDBJ databases">
        <title>Potato and tomato Forever Young genes contain class-I patatin-like regulatory sequences.</title>
        <authorList>
            <person name="Fu H."/>
            <person name="Song J."/>
            <person name="Du J."/>
            <person name="Jiang J."/>
            <person name="Park W.D."/>
        </authorList>
    </citation>
    <scope>NUCLEOTIDE SEQUENCE [MRNA]</scope>
    <source>
        <strain>cv. Landsberg erecta</strain>
        <tissue>Flower</tissue>
    </source>
</reference>
<reference key="3">
    <citation type="journal article" date="1999" name="Nature">
        <title>Sequence and analysis of chromosome 4 of the plant Arabidopsis thaliana.</title>
        <authorList>
            <person name="Mayer K.F.X."/>
            <person name="Schueller C."/>
            <person name="Wambutt R."/>
            <person name="Murphy G."/>
            <person name="Volckaert G."/>
            <person name="Pohl T."/>
            <person name="Duesterhoeft A."/>
            <person name="Stiekema W."/>
            <person name="Entian K.-D."/>
            <person name="Terryn N."/>
            <person name="Harris B."/>
            <person name="Ansorge W."/>
            <person name="Brandt P."/>
            <person name="Grivell L.A."/>
            <person name="Rieger M."/>
            <person name="Weichselgartner M."/>
            <person name="de Simone V."/>
            <person name="Obermaier B."/>
            <person name="Mache R."/>
            <person name="Mueller M."/>
            <person name="Kreis M."/>
            <person name="Delseny M."/>
            <person name="Puigdomenech P."/>
            <person name="Watson M."/>
            <person name="Schmidtheini T."/>
            <person name="Reichert B."/>
            <person name="Portetelle D."/>
            <person name="Perez-Alonso M."/>
            <person name="Boutry M."/>
            <person name="Bancroft I."/>
            <person name="Vos P."/>
            <person name="Hoheisel J."/>
            <person name="Zimmermann W."/>
            <person name="Wedler H."/>
            <person name="Ridley P."/>
            <person name="Langham S.-A."/>
            <person name="McCullagh B."/>
            <person name="Bilham L."/>
            <person name="Robben J."/>
            <person name="van der Schueren J."/>
            <person name="Grymonprez B."/>
            <person name="Chuang Y.-J."/>
            <person name="Vandenbussche F."/>
            <person name="Braeken M."/>
            <person name="Weltjens I."/>
            <person name="Voet M."/>
            <person name="Bastiaens I."/>
            <person name="Aert R."/>
            <person name="Defoor E."/>
            <person name="Weitzenegger T."/>
            <person name="Bothe G."/>
            <person name="Ramsperger U."/>
            <person name="Hilbert H."/>
            <person name="Braun M."/>
            <person name="Holzer E."/>
            <person name="Brandt A."/>
            <person name="Peters S."/>
            <person name="van Staveren M."/>
            <person name="Dirkse W."/>
            <person name="Mooijman P."/>
            <person name="Klein Lankhorst R."/>
            <person name="Rose M."/>
            <person name="Hauf J."/>
            <person name="Koetter P."/>
            <person name="Berneiser S."/>
            <person name="Hempel S."/>
            <person name="Feldpausch M."/>
            <person name="Lamberth S."/>
            <person name="Van den Daele H."/>
            <person name="De Keyser A."/>
            <person name="Buysshaert C."/>
            <person name="Gielen J."/>
            <person name="Villarroel R."/>
            <person name="De Clercq R."/>
            <person name="van Montagu M."/>
            <person name="Rogers J."/>
            <person name="Cronin A."/>
            <person name="Quail M.A."/>
            <person name="Bray-Allen S."/>
            <person name="Clark L."/>
            <person name="Doggett J."/>
            <person name="Hall S."/>
            <person name="Kay M."/>
            <person name="Lennard N."/>
            <person name="McLay K."/>
            <person name="Mayes R."/>
            <person name="Pettett A."/>
            <person name="Rajandream M.A."/>
            <person name="Lyne M."/>
            <person name="Benes V."/>
            <person name="Rechmann S."/>
            <person name="Borkova D."/>
            <person name="Bloecker H."/>
            <person name="Scharfe M."/>
            <person name="Grimm M."/>
            <person name="Loehnert T.-H."/>
            <person name="Dose S."/>
            <person name="de Haan M."/>
            <person name="Maarse A.C."/>
            <person name="Schaefer M."/>
            <person name="Mueller-Auer S."/>
            <person name="Gabel C."/>
            <person name="Fuchs M."/>
            <person name="Fartmann B."/>
            <person name="Granderath K."/>
            <person name="Dauner D."/>
            <person name="Herzl A."/>
            <person name="Neumann S."/>
            <person name="Argiriou A."/>
            <person name="Vitale D."/>
            <person name="Liguori R."/>
            <person name="Piravandi E."/>
            <person name="Massenet O."/>
            <person name="Quigley F."/>
            <person name="Clabauld G."/>
            <person name="Muendlein A."/>
            <person name="Felber R."/>
            <person name="Schnabl S."/>
            <person name="Hiller R."/>
            <person name="Schmidt W."/>
            <person name="Lecharny A."/>
            <person name="Aubourg S."/>
            <person name="Chefdor F."/>
            <person name="Cooke R."/>
            <person name="Berger C."/>
            <person name="Monfort A."/>
            <person name="Casacuberta E."/>
            <person name="Gibbons T."/>
            <person name="Weber N."/>
            <person name="Vandenbol M."/>
            <person name="Bargues M."/>
            <person name="Terol J."/>
            <person name="Torres A."/>
            <person name="Perez-Perez A."/>
            <person name="Purnelle B."/>
            <person name="Bent E."/>
            <person name="Johnson S."/>
            <person name="Tacon D."/>
            <person name="Jesse T."/>
            <person name="Heijnen L."/>
            <person name="Schwarz S."/>
            <person name="Scholler P."/>
            <person name="Heber S."/>
            <person name="Francs P."/>
            <person name="Bielke C."/>
            <person name="Frishman D."/>
            <person name="Haase D."/>
            <person name="Lemcke K."/>
            <person name="Mewes H.-W."/>
            <person name="Stocker S."/>
            <person name="Zaccaria P."/>
            <person name="Bevan M."/>
            <person name="Wilson R.K."/>
            <person name="de la Bastide M."/>
            <person name="Habermann K."/>
            <person name="Parnell L."/>
            <person name="Dedhia N."/>
            <person name="Gnoj L."/>
            <person name="Schutz K."/>
            <person name="Huang E."/>
            <person name="Spiegel L."/>
            <person name="Sekhon M."/>
            <person name="Murray J."/>
            <person name="Sheet P."/>
            <person name="Cordes M."/>
            <person name="Abu-Threideh J."/>
            <person name="Stoneking T."/>
            <person name="Kalicki J."/>
            <person name="Graves T."/>
            <person name="Harmon G."/>
            <person name="Edwards J."/>
            <person name="Latreille P."/>
            <person name="Courtney L."/>
            <person name="Cloud J."/>
            <person name="Abbott A."/>
            <person name="Scott K."/>
            <person name="Johnson D."/>
            <person name="Minx P."/>
            <person name="Bentley D."/>
            <person name="Fulton B."/>
            <person name="Miller N."/>
            <person name="Greco T."/>
            <person name="Kemp K."/>
            <person name="Kramer J."/>
            <person name="Fulton L."/>
            <person name="Mardis E."/>
            <person name="Dante M."/>
            <person name="Pepin K."/>
            <person name="Hillier L.W."/>
            <person name="Nelson J."/>
            <person name="Spieth J."/>
            <person name="Ryan E."/>
            <person name="Andrews S."/>
            <person name="Geisel C."/>
            <person name="Layman D."/>
            <person name="Du H."/>
            <person name="Ali J."/>
            <person name="Berghoff A."/>
            <person name="Jones K."/>
            <person name="Drone K."/>
            <person name="Cotton M."/>
            <person name="Joshu C."/>
            <person name="Antonoiu B."/>
            <person name="Zidanic M."/>
            <person name="Strong C."/>
            <person name="Sun H."/>
            <person name="Lamar B."/>
            <person name="Yordan C."/>
            <person name="Ma P."/>
            <person name="Zhong J."/>
            <person name="Preston R."/>
            <person name="Vil D."/>
            <person name="Shekher M."/>
            <person name="Matero A."/>
            <person name="Shah R."/>
            <person name="Swaby I.K."/>
            <person name="O'Shaughnessy A."/>
            <person name="Rodriguez M."/>
            <person name="Hoffman J."/>
            <person name="Till S."/>
            <person name="Granat S."/>
            <person name="Shohdy N."/>
            <person name="Hasegawa A."/>
            <person name="Hameed A."/>
            <person name="Lodhi M."/>
            <person name="Johnson A."/>
            <person name="Chen E."/>
            <person name="Marra M.A."/>
            <person name="Martienssen R."/>
            <person name="McCombie W.R."/>
        </authorList>
    </citation>
    <scope>NUCLEOTIDE SEQUENCE [LARGE SCALE GENOMIC DNA]</scope>
    <source>
        <strain>cv. Columbia</strain>
    </source>
</reference>
<reference key="4">
    <citation type="journal article" date="2017" name="Plant J.">
        <title>Araport11: a complete reannotation of the Arabidopsis thaliana reference genome.</title>
        <authorList>
            <person name="Cheng C.Y."/>
            <person name="Krishnakumar V."/>
            <person name="Chan A.P."/>
            <person name="Thibaud-Nissen F."/>
            <person name="Schobel S."/>
            <person name="Town C.D."/>
        </authorList>
    </citation>
    <scope>GENOME REANNOTATION</scope>
    <source>
        <strain>cv. Columbia</strain>
    </source>
</reference>
<reference key="5">
    <citation type="submission" date="2006-07" db="EMBL/GenBank/DDBJ databases">
        <title>Large-scale analysis of RIKEN Arabidopsis full-length (RAFL) cDNAs.</title>
        <authorList>
            <person name="Totoki Y."/>
            <person name="Seki M."/>
            <person name="Ishida J."/>
            <person name="Nakajima M."/>
            <person name="Enju A."/>
            <person name="Kamiya A."/>
            <person name="Narusaka M."/>
            <person name="Shin-i T."/>
            <person name="Nakagawa M."/>
            <person name="Sakamoto N."/>
            <person name="Oishi K."/>
            <person name="Kohara Y."/>
            <person name="Kobayashi M."/>
            <person name="Toyoda A."/>
            <person name="Sakaki Y."/>
            <person name="Sakurai T."/>
            <person name="Iida K."/>
            <person name="Akiyama K."/>
            <person name="Satou M."/>
            <person name="Toyoda T."/>
            <person name="Konagaya A."/>
            <person name="Carninci P."/>
            <person name="Kawai J."/>
            <person name="Hayashizaki Y."/>
            <person name="Shinozaki K."/>
        </authorList>
    </citation>
    <scope>NUCLEOTIDE SEQUENCE [LARGE SCALE MRNA]</scope>
    <source>
        <strain>cv. Columbia</strain>
    </source>
</reference>
<reference key="6">
    <citation type="journal article" date="2012" name="Mol. Cell. Proteomics">
        <title>Comparative large-scale characterisation of plant vs. mammal proteins reveals similar and idiosyncratic N-alpha acetylation features.</title>
        <authorList>
            <person name="Bienvenut W.V."/>
            <person name="Sumpton D."/>
            <person name="Martinez A."/>
            <person name="Lilla S."/>
            <person name="Espagne C."/>
            <person name="Meinnel T."/>
            <person name="Giglione C."/>
        </authorList>
    </citation>
    <scope>ACETYLATION [LARGE SCALE ANALYSIS] AT SER-2</scope>
    <scope>CLEAVAGE OF INITIATOR METHIONINE [LARGE SCALE ANALYSIS]</scope>
    <scope>IDENTIFICATION BY MASS SPECTROMETRY [LARGE SCALE ANALYSIS]</scope>
</reference>
<dbReference type="EC" id="1.1.-.-" evidence="7"/>
<dbReference type="EMBL" id="S77418">
    <property type="protein sequence ID" value="AAB33362.1"/>
    <property type="status" value="ALT_FRAME"/>
    <property type="molecule type" value="Genomic_DNA"/>
</dbReference>
<dbReference type="EMBL" id="AF217275">
    <property type="protein sequence ID" value="AAG44120.1"/>
    <property type="molecule type" value="mRNA"/>
</dbReference>
<dbReference type="EMBL" id="AL035602">
    <property type="protein sequence ID" value="CAB38288.1"/>
    <property type="status" value="ALT_SEQ"/>
    <property type="molecule type" value="Genomic_DNA"/>
</dbReference>
<dbReference type="EMBL" id="AL078579">
    <property type="protein sequence ID" value="CAB43965.1"/>
    <property type="status" value="ALT_SEQ"/>
    <property type="molecule type" value="Genomic_DNA"/>
</dbReference>
<dbReference type="EMBL" id="AL161571">
    <property type="protein sequence ID" value="CAB81426.1"/>
    <property type="status" value="ALT_SEQ"/>
    <property type="molecule type" value="Genomic_DNA"/>
</dbReference>
<dbReference type="EMBL" id="CP002687">
    <property type="protein sequence ID" value="AEE85390.1"/>
    <property type="molecule type" value="Genomic_DNA"/>
</dbReference>
<dbReference type="EMBL" id="AK226796">
    <property type="protein sequence ID" value="BAE98894.1"/>
    <property type="molecule type" value="mRNA"/>
</dbReference>
<dbReference type="PIR" id="H85322">
    <property type="entry name" value="H85322"/>
</dbReference>
<dbReference type="PIR" id="T05881">
    <property type="entry name" value="T05881"/>
</dbReference>
<dbReference type="PIR" id="T09016">
    <property type="entry name" value="T09016"/>
</dbReference>
<dbReference type="RefSeq" id="NP_194506.4">
    <property type="nucleotide sequence ID" value="NM_118915.6"/>
</dbReference>
<dbReference type="SMR" id="F4JJR8"/>
<dbReference type="FunCoup" id="F4JJR8">
    <property type="interactions" value="461"/>
</dbReference>
<dbReference type="STRING" id="3702.F4JJR8"/>
<dbReference type="iPTMnet" id="F4JJR8"/>
<dbReference type="PaxDb" id="3702-AT4G27760.1"/>
<dbReference type="ProteomicsDB" id="230716"/>
<dbReference type="EnsemblPlants" id="AT4G27760.1">
    <property type="protein sequence ID" value="AT4G27760.1"/>
    <property type="gene ID" value="AT4G27760"/>
</dbReference>
<dbReference type="GeneID" id="828890"/>
<dbReference type="Gramene" id="AT4G27760.1">
    <property type="protein sequence ID" value="AT4G27760.1"/>
    <property type="gene ID" value="AT4G27760"/>
</dbReference>
<dbReference type="KEGG" id="ath:AT4G27760"/>
<dbReference type="Araport" id="AT4G27760"/>
<dbReference type="TAIR" id="AT4G27760">
    <property type="gene designation" value="FEY"/>
</dbReference>
<dbReference type="eggNOG" id="KOG1208">
    <property type="taxonomic scope" value="Eukaryota"/>
</dbReference>
<dbReference type="HOGENOM" id="CLU_010194_44_2_1"/>
<dbReference type="InParanoid" id="F4JJR8"/>
<dbReference type="OMA" id="HEVWEKT"/>
<dbReference type="PRO" id="PR:F4JJR8"/>
<dbReference type="Proteomes" id="UP000006548">
    <property type="component" value="Chromosome 4"/>
</dbReference>
<dbReference type="ExpressionAtlas" id="F4JJR8">
    <property type="expression patterns" value="baseline and differential"/>
</dbReference>
<dbReference type="GO" id="GO:0005783">
    <property type="term" value="C:endoplasmic reticulum"/>
    <property type="evidence" value="ECO:0007005"/>
    <property type="project" value="TAIR"/>
</dbReference>
<dbReference type="GO" id="GO:0016491">
    <property type="term" value="F:oxidoreductase activity"/>
    <property type="evidence" value="ECO:0007669"/>
    <property type="project" value="UniProtKB-KW"/>
</dbReference>
<dbReference type="GO" id="GO:0010073">
    <property type="term" value="P:meristem maintenance"/>
    <property type="evidence" value="ECO:0000315"/>
    <property type="project" value="TAIR"/>
</dbReference>
<dbReference type="GO" id="GO:2000024">
    <property type="term" value="P:regulation of leaf development"/>
    <property type="evidence" value="ECO:0000315"/>
    <property type="project" value="UniProtKB"/>
</dbReference>
<dbReference type="FunFam" id="3.40.50.720:FF:000769">
    <property type="entry name" value="Forever young oxidoreductase"/>
    <property type="match status" value="1"/>
</dbReference>
<dbReference type="Gene3D" id="3.40.50.720">
    <property type="entry name" value="NAD(P)-binding Rossmann-like Domain"/>
    <property type="match status" value="1"/>
</dbReference>
<dbReference type="InterPro" id="IPR036291">
    <property type="entry name" value="NAD(P)-bd_dom_sf"/>
</dbReference>
<dbReference type="InterPro" id="IPR002347">
    <property type="entry name" value="SDR_fam"/>
</dbReference>
<dbReference type="PANTHER" id="PTHR24320:SF200">
    <property type="entry name" value="DEHYDROGENASE_REDUCTASE SDR FAMILY MEMBER FEY"/>
    <property type="match status" value="1"/>
</dbReference>
<dbReference type="PANTHER" id="PTHR24320">
    <property type="entry name" value="RETINOL DEHYDROGENASE"/>
    <property type="match status" value="1"/>
</dbReference>
<dbReference type="Pfam" id="PF00106">
    <property type="entry name" value="adh_short"/>
    <property type="match status" value="1"/>
</dbReference>
<dbReference type="PRINTS" id="PR00081">
    <property type="entry name" value="GDHRDH"/>
</dbReference>
<dbReference type="PRINTS" id="PR00080">
    <property type="entry name" value="SDRFAMILY"/>
</dbReference>
<dbReference type="SUPFAM" id="SSF51735">
    <property type="entry name" value="NAD(P)-binding Rossmann-fold domains"/>
    <property type="match status" value="1"/>
</dbReference>
<accession>F4JJR8</accession>
<accession>Q0WVF4</accession>
<accession>Q41248</accession>
<accession>Q9FQM0</accession>
<accession>Q9STP9</accession>
<accession>Q9T098</accession>
<organism>
    <name type="scientific">Arabidopsis thaliana</name>
    <name type="common">Mouse-ear cress</name>
    <dbReference type="NCBI Taxonomy" id="3702"/>
    <lineage>
        <taxon>Eukaryota</taxon>
        <taxon>Viridiplantae</taxon>
        <taxon>Streptophyta</taxon>
        <taxon>Embryophyta</taxon>
        <taxon>Tracheophyta</taxon>
        <taxon>Spermatophyta</taxon>
        <taxon>Magnoliopsida</taxon>
        <taxon>eudicotyledons</taxon>
        <taxon>Gunneridae</taxon>
        <taxon>Pentapetalae</taxon>
        <taxon>rosids</taxon>
        <taxon>malvids</taxon>
        <taxon>Brassicales</taxon>
        <taxon>Brassicaceae</taxon>
        <taxon>Camelineae</taxon>
        <taxon>Arabidopsis</taxon>
    </lineage>
</organism>
<name>FEY_ARATH</name>
<evidence type="ECO:0000250" key="1"/>
<evidence type="ECO:0000250" key="2">
    <source>
        <dbReference type="UniProtKB" id="Q5RJY4"/>
    </source>
</evidence>
<evidence type="ECO:0000255" key="3"/>
<evidence type="ECO:0000255" key="4">
    <source>
        <dbReference type="PROSITE-ProRule" id="PRU10001"/>
    </source>
</evidence>
<evidence type="ECO:0000269" key="5">
    <source>
    </source>
</evidence>
<evidence type="ECO:0000303" key="6">
    <source>
    </source>
</evidence>
<evidence type="ECO:0000305" key="7"/>
<evidence type="ECO:0000312" key="8">
    <source>
        <dbReference type="Araport" id="AT4G27760"/>
    </source>
</evidence>
<evidence type="ECO:0000312" key="9">
    <source>
        <dbReference type="EMBL" id="CAB43965.1"/>
    </source>
</evidence>
<evidence type="ECO:0007744" key="10">
    <source>
    </source>
</evidence>
<comment type="function">
    <text evidence="2 5">Putative oxidoreductase (By similarity). Required for vegetative shoot apex development, especially during leaf positioning and for shoot apical meristem (SAM) maintenance (PubMed:7849756).</text>
</comment>
<comment type="tissue specificity">
    <text evidence="5">Expressed in roots, stems, leaves and flowers and, at lower levels, in siliques.</text>
</comment>
<comment type="disruption phenotype">
    <text evidence="5">Disruption of the development of the vegetative shoot apex. Abnormal leaf positioning and impaired shoot apical meristem (SAM) maintenance, leading to the death of most plants prior to the end of vegetative development.</text>
</comment>
<comment type="similarity">
    <text evidence="7">Belongs to the short-chain dehydrogenases/reductases (SDR) family.</text>
</comment>
<comment type="sequence caution" evidence="7">
    <conflict type="frameshift">
        <sequence resource="EMBL-CDS" id="AAB33362"/>
    </conflict>
</comment>
<comment type="sequence caution" evidence="7">
    <conflict type="erroneous gene model prediction">
        <sequence resource="EMBL-CDS" id="CAB38288"/>
    </conflict>
</comment>
<comment type="sequence caution" evidence="7">
    <conflict type="erroneous gene model prediction">
        <sequence resource="EMBL-CDS" id="CAB43965"/>
    </conflict>
</comment>
<comment type="sequence caution" evidence="7">
    <conflict type="erroneous gene model prediction">
        <sequence resource="EMBL-CDS" id="CAB81426"/>
    </conflict>
</comment>
<keyword id="KW-0007">Acetylation</keyword>
<keyword id="KW-0520">NAD</keyword>
<keyword id="KW-0521">NADP</keyword>
<keyword id="KW-0560">Oxidoreductase</keyword>
<keyword id="KW-1185">Reference proteome</keyword>
<gene>
    <name evidence="6" type="primary">FEY</name>
    <name evidence="7" type="synonym">FEY3</name>
    <name evidence="8" type="ordered locus">At4g27760</name>
    <name evidence="9" type="ORF">T27E11.10</name>
    <name evidence="7" type="ORF">T29A15</name>
</gene>
<feature type="initiator methionine" description="Removed" evidence="10">
    <location>
        <position position="1"/>
    </location>
</feature>
<feature type="chain" id="PRO_0000441878" description="Dehydrogenase/reductase SDR family member FEY">
    <location>
        <begin position="2"/>
        <end position="376"/>
    </location>
</feature>
<feature type="active site" description="Proton acceptor" evidence="4">
    <location>
        <position position="227"/>
    </location>
</feature>
<feature type="binding site" evidence="1">
    <location>
        <begin position="61"/>
        <end position="85"/>
    </location>
    <ligand>
        <name>NAD(+)</name>
        <dbReference type="ChEBI" id="CHEBI:57540"/>
    </ligand>
</feature>
<feature type="binding site" evidence="3">
    <location>
        <position position="199"/>
    </location>
    <ligand>
        <name>substrate</name>
    </ligand>
</feature>
<feature type="modified residue" description="N-acetylserine" evidence="10">
    <location>
        <position position="2"/>
    </location>
</feature>
<feature type="sequence conflict" description="In Ref. 5; BAE98894." evidence="7" ref="5">
    <original>A</original>
    <variation>E</variation>
    <location>
        <position position="156"/>
    </location>
</feature>
<feature type="sequence conflict" description="In Ref. 2; AAG44120." evidence="7" ref="2">
    <original>K</original>
    <variation>E</variation>
    <location>
        <position position="345"/>
    </location>
</feature>